<accession>Q65R84</accession>
<name>ISPG_MANSM</name>
<dbReference type="EC" id="1.17.7.3" evidence="1"/>
<dbReference type="EMBL" id="AE016827">
    <property type="protein sequence ID" value="AAU38526.1"/>
    <property type="molecule type" value="Genomic_DNA"/>
</dbReference>
<dbReference type="RefSeq" id="WP_011201079.1">
    <property type="nucleotide sequence ID" value="NC_006300.1"/>
</dbReference>
<dbReference type="SMR" id="Q65R84"/>
<dbReference type="STRING" id="221988.MS1919"/>
<dbReference type="KEGG" id="msu:MS1919"/>
<dbReference type="eggNOG" id="COG0821">
    <property type="taxonomic scope" value="Bacteria"/>
</dbReference>
<dbReference type="HOGENOM" id="CLU_042258_0_0_6"/>
<dbReference type="OrthoDB" id="9803214at2"/>
<dbReference type="UniPathway" id="UPA00056">
    <property type="reaction ID" value="UER00096"/>
</dbReference>
<dbReference type="Proteomes" id="UP000000607">
    <property type="component" value="Chromosome"/>
</dbReference>
<dbReference type="GO" id="GO:0051539">
    <property type="term" value="F:4 iron, 4 sulfur cluster binding"/>
    <property type="evidence" value="ECO:0007669"/>
    <property type="project" value="UniProtKB-UniRule"/>
</dbReference>
<dbReference type="GO" id="GO:0046429">
    <property type="term" value="F:4-hydroxy-3-methylbut-2-en-1-yl diphosphate synthase activity (ferredoxin)"/>
    <property type="evidence" value="ECO:0007669"/>
    <property type="project" value="UniProtKB-UniRule"/>
</dbReference>
<dbReference type="GO" id="GO:0141197">
    <property type="term" value="F:4-hydroxy-3-methylbut-2-enyl-diphosphate synthase activity (flavodoxin)"/>
    <property type="evidence" value="ECO:0007669"/>
    <property type="project" value="UniProtKB-EC"/>
</dbReference>
<dbReference type="GO" id="GO:0005506">
    <property type="term" value="F:iron ion binding"/>
    <property type="evidence" value="ECO:0007669"/>
    <property type="project" value="InterPro"/>
</dbReference>
<dbReference type="GO" id="GO:0019288">
    <property type="term" value="P:isopentenyl diphosphate biosynthetic process, methylerythritol 4-phosphate pathway"/>
    <property type="evidence" value="ECO:0007669"/>
    <property type="project" value="UniProtKB-UniRule"/>
</dbReference>
<dbReference type="GO" id="GO:0016114">
    <property type="term" value="P:terpenoid biosynthetic process"/>
    <property type="evidence" value="ECO:0007669"/>
    <property type="project" value="InterPro"/>
</dbReference>
<dbReference type="FunFam" id="3.20.20.20:FF:000001">
    <property type="entry name" value="4-hydroxy-3-methylbut-2-en-1-yl diphosphate synthase (flavodoxin)"/>
    <property type="match status" value="1"/>
</dbReference>
<dbReference type="FunFam" id="3.30.413.10:FF:000002">
    <property type="entry name" value="4-hydroxy-3-methylbut-2-en-1-yl diphosphate synthase (flavodoxin)"/>
    <property type="match status" value="1"/>
</dbReference>
<dbReference type="Gene3D" id="3.20.20.20">
    <property type="entry name" value="Dihydropteroate synthase-like"/>
    <property type="match status" value="1"/>
</dbReference>
<dbReference type="Gene3D" id="3.30.413.10">
    <property type="entry name" value="Sulfite Reductase Hemoprotein, domain 1"/>
    <property type="match status" value="1"/>
</dbReference>
<dbReference type="HAMAP" id="MF_00159">
    <property type="entry name" value="IspG"/>
    <property type="match status" value="1"/>
</dbReference>
<dbReference type="InterPro" id="IPR011005">
    <property type="entry name" value="Dihydropteroate_synth-like_sf"/>
</dbReference>
<dbReference type="InterPro" id="IPR016425">
    <property type="entry name" value="IspG_bac"/>
</dbReference>
<dbReference type="InterPro" id="IPR004588">
    <property type="entry name" value="IspG_bac-typ"/>
</dbReference>
<dbReference type="InterPro" id="IPR045854">
    <property type="entry name" value="NO2/SO3_Rdtase_4Fe4S_sf"/>
</dbReference>
<dbReference type="NCBIfam" id="TIGR00612">
    <property type="entry name" value="ispG_gcpE"/>
    <property type="match status" value="1"/>
</dbReference>
<dbReference type="NCBIfam" id="NF001540">
    <property type="entry name" value="PRK00366.1"/>
    <property type="match status" value="1"/>
</dbReference>
<dbReference type="PANTHER" id="PTHR30454">
    <property type="entry name" value="4-HYDROXY-3-METHYLBUT-2-EN-1-YL DIPHOSPHATE SYNTHASE"/>
    <property type="match status" value="1"/>
</dbReference>
<dbReference type="PANTHER" id="PTHR30454:SF0">
    <property type="entry name" value="4-HYDROXY-3-METHYLBUT-2-EN-1-YL DIPHOSPHATE SYNTHASE (FERREDOXIN), CHLOROPLASTIC"/>
    <property type="match status" value="1"/>
</dbReference>
<dbReference type="Pfam" id="PF04551">
    <property type="entry name" value="GcpE"/>
    <property type="match status" value="1"/>
</dbReference>
<dbReference type="PIRSF" id="PIRSF004640">
    <property type="entry name" value="IspG"/>
    <property type="match status" value="1"/>
</dbReference>
<dbReference type="SUPFAM" id="SSF51717">
    <property type="entry name" value="Dihydropteroate synthetase-like"/>
    <property type="match status" value="1"/>
</dbReference>
<dbReference type="SUPFAM" id="SSF56014">
    <property type="entry name" value="Nitrite and sulphite reductase 4Fe-4S domain-like"/>
    <property type="match status" value="1"/>
</dbReference>
<feature type="chain" id="PRO_0000190595" description="4-hydroxy-3-methylbut-2-en-1-yl diphosphate synthase (flavodoxin)">
    <location>
        <begin position="1"/>
        <end position="368"/>
    </location>
</feature>
<feature type="binding site" evidence="1">
    <location>
        <position position="271"/>
    </location>
    <ligand>
        <name>[4Fe-4S] cluster</name>
        <dbReference type="ChEBI" id="CHEBI:49883"/>
    </ligand>
</feature>
<feature type="binding site" evidence="1">
    <location>
        <position position="274"/>
    </location>
    <ligand>
        <name>[4Fe-4S] cluster</name>
        <dbReference type="ChEBI" id="CHEBI:49883"/>
    </ligand>
</feature>
<feature type="binding site" evidence="1">
    <location>
        <position position="306"/>
    </location>
    <ligand>
        <name>[4Fe-4S] cluster</name>
        <dbReference type="ChEBI" id="CHEBI:49883"/>
    </ligand>
</feature>
<feature type="binding site" evidence="1">
    <location>
        <position position="313"/>
    </location>
    <ligand>
        <name>[4Fe-4S] cluster</name>
        <dbReference type="ChEBI" id="CHEBI:49883"/>
    </ligand>
</feature>
<comment type="function">
    <text evidence="1">Converts 2C-methyl-D-erythritol 2,4-cyclodiphosphate (ME-2,4cPP) into 1-hydroxy-2-methyl-2-(E)-butenyl 4-diphosphate.</text>
</comment>
<comment type="catalytic activity">
    <reaction evidence="1">
        <text>(2E)-4-hydroxy-3-methylbut-2-enyl diphosphate + oxidized [flavodoxin] + H2O + 2 H(+) = 2-C-methyl-D-erythritol 2,4-cyclic diphosphate + reduced [flavodoxin]</text>
        <dbReference type="Rhea" id="RHEA:43604"/>
        <dbReference type="Rhea" id="RHEA-COMP:10622"/>
        <dbReference type="Rhea" id="RHEA-COMP:10623"/>
        <dbReference type="ChEBI" id="CHEBI:15377"/>
        <dbReference type="ChEBI" id="CHEBI:15378"/>
        <dbReference type="ChEBI" id="CHEBI:57618"/>
        <dbReference type="ChEBI" id="CHEBI:58210"/>
        <dbReference type="ChEBI" id="CHEBI:58483"/>
        <dbReference type="ChEBI" id="CHEBI:128753"/>
        <dbReference type="EC" id="1.17.7.3"/>
    </reaction>
</comment>
<comment type="cofactor">
    <cofactor evidence="1">
        <name>[4Fe-4S] cluster</name>
        <dbReference type="ChEBI" id="CHEBI:49883"/>
    </cofactor>
    <text evidence="1">Binds 1 [4Fe-4S] cluster.</text>
</comment>
<comment type="pathway">
    <text evidence="1">Isoprenoid biosynthesis; isopentenyl diphosphate biosynthesis via DXP pathway; isopentenyl diphosphate from 1-deoxy-D-xylulose 5-phosphate: step 5/6.</text>
</comment>
<comment type="similarity">
    <text evidence="1">Belongs to the IspG family.</text>
</comment>
<proteinExistence type="inferred from homology"/>
<evidence type="ECO:0000255" key="1">
    <source>
        <dbReference type="HAMAP-Rule" id="MF_00159"/>
    </source>
</evidence>
<keyword id="KW-0004">4Fe-4S</keyword>
<keyword id="KW-0408">Iron</keyword>
<keyword id="KW-0411">Iron-sulfur</keyword>
<keyword id="KW-0414">Isoprene biosynthesis</keyword>
<keyword id="KW-0479">Metal-binding</keyword>
<keyword id="KW-0560">Oxidoreductase</keyword>
<organism>
    <name type="scientific">Mannheimia succiniciproducens (strain KCTC 0769BP / MBEL55E)</name>
    <dbReference type="NCBI Taxonomy" id="221988"/>
    <lineage>
        <taxon>Bacteria</taxon>
        <taxon>Pseudomonadati</taxon>
        <taxon>Pseudomonadota</taxon>
        <taxon>Gammaproteobacteria</taxon>
        <taxon>Pasteurellales</taxon>
        <taxon>Pasteurellaceae</taxon>
        <taxon>Basfia</taxon>
    </lineage>
</organism>
<reference key="1">
    <citation type="journal article" date="2004" name="Nat. Biotechnol.">
        <title>The genome sequence of the capnophilic rumen bacterium Mannheimia succiniciproducens.</title>
        <authorList>
            <person name="Hong S.H."/>
            <person name="Kim J.S."/>
            <person name="Lee S.Y."/>
            <person name="In Y.H."/>
            <person name="Choi S.S."/>
            <person name="Rih J.-K."/>
            <person name="Kim C.H."/>
            <person name="Jeong H."/>
            <person name="Hur C.G."/>
            <person name="Kim J.J."/>
        </authorList>
    </citation>
    <scope>NUCLEOTIDE SEQUENCE [LARGE SCALE GENOMIC DNA]</scope>
    <source>
        <strain>KCTC 0769BP / MBEL55E</strain>
    </source>
</reference>
<sequence length="368" mass="40033">MSAFKPTIKRRESTKIYVGNVPVGGDAPIAVQSMTNTRTTDVEATVAQIKALERVGADIIRVSVPTMEAAEAFKLIKRQSSVPLVADIHFDYRIALKVAEYGVDCLRINPGNIGREDRIRAVVDCAKDKNIPIRIGINAGSLEKDIQEKYGEPTPEALLESALRHVEILDRLNFDQFKVSVKASDVFLAVEAYRLLAKAIKQPLHLGITEAGGARAGAVKSAVGLGMLLAEGIGDTLRVSLAADPVEEIKVGFDILKSLRIRSRGINFIACPTCSRQEFDVIGTVNALEQRLEDIITPMDVSIIGCVVNGPGEALVSDLGVTGGNKKSGFYLNGERQKERFDNEYIVDQLEAKIRAKIAAQDPKNRIL</sequence>
<gene>
    <name evidence="1" type="primary">ispG</name>
    <name type="synonym">gcpE</name>
    <name type="ordered locus">MS1919</name>
</gene>
<protein>
    <recommendedName>
        <fullName evidence="1">4-hydroxy-3-methylbut-2-en-1-yl diphosphate synthase (flavodoxin)</fullName>
        <ecNumber evidence="1">1.17.7.3</ecNumber>
    </recommendedName>
    <alternativeName>
        <fullName evidence="1">1-hydroxy-2-methyl-2-(E)-butenyl 4-diphosphate synthase</fullName>
    </alternativeName>
</protein>